<keyword id="KW-0002">3D-structure</keyword>
<keyword id="KW-0106">Calcium</keyword>
<keyword id="KW-0119">Carbohydrate metabolism</keyword>
<keyword id="KW-0903">Direct protein sequencing</keyword>
<keyword id="KW-0326">Glycosidase</keyword>
<keyword id="KW-0378">Hydrolase</keyword>
<keyword id="KW-0479">Metal-binding</keyword>
<keyword id="KW-0964">Secreted</keyword>
<keyword id="KW-0732">Signal</keyword>
<protein>
    <recommendedName>
        <fullName>Extracellular exo-alpha-(1-&gt;5)-L-arabinofuranosidase ArbA</fullName>
        <shortName>ABF</shortName>
        <ecNumber evidence="2 3">3.2.1.55</ecNumber>
    </recommendedName>
    <alternativeName>
        <fullName>Extracellular arabinan exo-alpha-(1-&gt;5)-L-arabinosidase ArbA</fullName>
        <shortName>Arabinosidase</shortName>
    </alternativeName>
</protein>
<dbReference type="EC" id="3.2.1.55" evidence="2 3"/>
<dbReference type="EMBL" id="Y10458">
    <property type="protein sequence ID" value="CAA71485.1"/>
    <property type="molecule type" value="Genomic_DNA"/>
</dbReference>
<dbReference type="PDB" id="1GYD">
    <property type="method" value="X-ray"/>
    <property type="resolution" value="2.05 A"/>
    <property type="chains" value="B=33-347"/>
</dbReference>
<dbReference type="PDB" id="1GYE">
    <property type="method" value="X-ray"/>
    <property type="resolution" value="2.50 A"/>
    <property type="chains" value="B=32-346"/>
</dbReference>
<dbReference type="PDB" id="1GYH">
    <property type="method" value="X-ray"/>
    <property type="resolution" value="1.89 A"/>
    <property type="chains" value="A/B/C/D/E/F=30-347"/>
</dbReference>
<dbReference type="PDBsum" id="1GYD"/>
<dbReference type="PDBsum" id="1GYE"/>
<dbReference type="PDBsum" id="1GYH"/>
<dbReference type="SMR" id="P95470"/>
<dbReference type="STRING" id="498211.CJA_0805"/>
<dbReference type="CAZy" id="GH43">
    <property type="family name" value="Glycoside Hydrolase Family 43"/>
</dbReference>
<dbReference type="eggNOG" id="COG3507">
    <property type="taxonomic scope" value="Bacteria"/>
</dbReference>
<dbReference type="UniPathway" id="UPA00667"/>
<dbReference type="EvolutionaryTrace" id="P95470"/>
<dbReference type="GO" id="GO:0005576">
    <property type="term" value="C:extracellular region"/>
    <property type="evidence" value="ECO:0007669"/>
    <property type="project" value="UniProtKB-SubCell"/>
</dbReference>
<dbReference type="GO" id="GO:0046556">
    <property type="term" value="F:alpha-L-arabinofuranosidase activity"/>
    <property type="evidence" value="ECO:0007669"/>
    <property type="project" value="UniProtKB-EC"/>
</dbReference>
<dbReference type="GO" id="GO:0046558">
    <property type="term" value="F:arabinan endo-1,5-alpha-L-arabinosidase activity"/>
    <property type="evidence" value="ECO:0007669"/>
    <property type="project" value="InterPro"/>
</dbReference>
<dbReference type="GO" id="GO:0046872">
    <property type="term" value="F:metal ion binding"/>
    <property type="evidence" value="ECO:0007669"/>
    <property type="project" value="UniProtKB-KW"/>
</dbReference>
<dbReference type="GO" id="GO:0031222">
    <property type="term" value="P:arabinan catabolic process"/>
    <property type="evidence" value="ECO:0007669"/>
    <property type="project" value="UniProtKB-UniPathway"/>
</dbReference>
<dbReference type="CDD" id="cd18830">
    <property type="entry name" value="GH43_CjArb43A-like"/>
    <property type="match status" value="1"/>
</dbReference>
<dbReference type="Gene3D" id="2.115.10.20">
    <property type="entry name" value="Glycosyl hydrolase domain, family 43"/>
    <property type="match status" value="1"/>
</dbReference>
<dbReference type="InterPro" id="IPR050727">
    <property type="entry name" value="GH43_arabinanases"/>
</dbReference>
<dbReference type="InterPro" id="IPR006710">
    <property type="entry name" value="Glyco_hydro_43"/>
</dbReference>
<dbReference type="InterPro" id="IPR016840">
    <property type="entry name" value="Glyco_hydro_43_endo_a_Ara-ase"/>
</dbReference>
<dbReference type="InterPro" id="IPR023296">
    <property type="entry name" value="Glyco_hydro_beta-prop_sf"/>
</dbReference>
<dbReference type="PANTHER" id="PTHR43301">
    <property type="entry name" value="ARABINAN ENDO-1,5-ALPHA-L-ARABINOSIDASE"/>
    <property type="match status" value="1"/>
</dbReference>
<dbReference type="PANTHER" id="PTHR43301:SF3">
    <property type="entry name" value="ARABINAN ENDO-1,5-ALPHA-L-ARABINOSIDASE A-RELATED"/>
    <property type="match status" value="1"/>
</dbReference>
<dbReference type="Pfam" id="PF04616">
    <property type="entry name" value="Glyco_hydro_43"/>
    <property type="match status" value="1"/>
</dbReference>
<dbReference type="PIRSF" id="PIRSF026534">
    <property type="entry name" value="Endo_alpha-L-arabinosidase"/>
    <property type="match status" value="1"/>
</dbReference>
<dbReference type="SUPFAM" id="SSF75005">
    <property type="entry name" value="Arabinanase/levansucrase/invertase"/>
    <property type="match status" value="1"/>
</dbReference>
<evidence type="ECO:0000269" key="1">
    <source>
    </source>
</evidence>
<evidence type="ECO:0000269" key="2">
    <source>
    </source>
</evidence>
<evidence type="ECO:0000269" key="3">
    <source>
    </source>
</evidence>
<evidence type="ECO:0000305" key="4"/>
<evidence type="ECO:0000305" key="5">
    <source>
    </source>
</evidence>
<evidence type="ECO:0000305" key="6">
    <source>
    </source>
</evidence>
<evidence type="ECO:0007829" key="7">
    <source>
        <dbReference type="PDB" id="1GYE"/>
    </source>
</evidence>
<evidence type="ECO:0007829" key="8">
    <source>
        <dbReference type="PDB" id="1GYH"/>
    </source>
</evidence>
<name>ARBA_CELJU</name>
<sequence>MPTHHPITRQHWHHSWLSALALLCASLACGAKQVDVHDPVMTREGDTWYLFSTGPGITIYSSKDRVNWRYSDRAFGTEPTWAKRVSPSFDGHLWAPDIYQHKGLFYLYYSVSAFGKNTSAIGVTVNKTLNPASPDYRWEDKGIVIESVPQRDLWNAIDPAIIADDHGQVWMSFGSFWGGLKLFKLNDDLTRPAEPQEWHSIAKLERSVLMDDSQAGSAQIEAPFILRKGDYYYLFASWGLCCRKGDSTYHLVVGRSKQVTGPYLDKTGRDMNQGGGSLLIKGNKRWVGLGHNSAYTWDGKDYLVLHAYEAADNYLQKLKILNLHWDGEGWPQVDEKELDSYISQRLK</sequence>
<organism>
    <name type="scientific">Cellvibrio japonicus (strain Ueda107)</name>
    <name type="common">Pseudomonas fluorescens subsp. cellulosa</name>
    <dbReference type="NCBI Taxonomy" id="498211"/>
    <lineage>
        <taxon>Bacteria</taxon>
        <taxon>Pseudomonadati</taxon>
        <taxon>Pseudomonadota</taxon>
        <taxon>Gammaproteobacteria</taxon>
        <taxon>Cellvibrionales</taxon>
        <taxon>Cellvibrionaceae</taxon>
        <taxon>Cellvibrio</taxon>
    </lineage>
</organism>
<feature type="signal peptide" evidence="3">
    <location>
        <begin position="1"/>
        <end position="31"/>
    </location>
</feature>
<feature type="chain" id="PRO_0000422121" description="Extracellular exo-alpha-(1-&gt;5)-L-arabinofuranosidase ArbA">
    <location>
        <begin position="32"/>
        <end position="347"/>
    </location>
</feature>
<feature type="active site" description="Proton acceptor" evidence="5">
    <location>
        <position position="38"/>
    </location>
</feature>
<feature type="active site" description="Proton donor" evidence="5">
    <location>
        <position position="221"/>
    </location>
</feature>
<feature type="binding site" evidence="1">
    <location>
        <position position="35"/>
    </location>
    <ligand>
        <name>substrate</name>
    </ligand>
</feature>
<feature type="binding site" evidence="1">
    <location>
        <begin position="90"/>
        <end position="92"/>
    </location>
    <ligand>
        <name>substrate</name>
    </ligand>
</feature>
<feature type="binding site" evidence="1">
    <location>
        <begin position="115"/>
        <end position="116"/>
    </location>
    <ligand>
        <name>substrate</name>
    </ligand>
</feature>
<feature type="binding site" evidence="1">
    <location>
        <position position="155"/>
    </location>
    <ligand>
        <name>substrate</name>
    </ligand>
</feature>
<feature type="binding site" evidence="1">
    <location>
        <position position="175"/>
    </location>
    <ligand>
        <name>substrate</name>
    </ligand>
</feature>
<feature type="binding site" evidence="1">
    <location>
        <position position="221"/>
    </location>
    <ligand>
        <name>substrate</name>
    </ligand>
</feature>
<feature type="binding site" evidence="4">
    <location>
        <position position="291"/>
    </location>
    <ligand>
        <name>Ca(2+)</name>
        <dbReference type="ChEBI" id="CHEBI:29108"/>
    </ligand>
</feature>
<feature type="binding site" evidence="1">
    <location>
        <position position="316"/>
    </location>
    <ligand>
        <name>substrate</name>
    </ligand>
</feature>
<feature type="site" description="Important for catalytic activity, responsible for pKa modulation of the active site Glu and correct orientation of both the proton donor and substrate" evidence="5">
    <location>
        <position position="158"/>
    </location>
</feature>
<feature type="site" description="Important for substrate recognition and stabilization">
    <location>
        <position position="291"/>
    </location>
</feature>
<feature type="mutagenesis site" description="Very slight decrease in exo-arabinofuranosidase activity. Switch from exo to an endo mode of action." evidence="2">
    <original>D</original>
    <variation>L</variation>
    <location>
        <position position="35"/>
    </location>
</feature>
<feature type="mutagenesis site" description="Loss of arabinofuranosidase activity." evidence="1">
    <original>D</original>
    <variation>A</variation>
    <location>
        <position position="38"/>
    </location>
</feature>
<feature type="mutagenesis site" description="Strong decrease of binding affinity." evidence="1">
    <original>D</original>
    <variation>E</variation>
    <location>
        <position position="38"/>
    </location>
</feature>
<feature type="mutagenesis site" description="Slight decrease of binding affinity." evidence="1">
    <original>D</original>
    <variation>N</variation>
    <location>
        <position position="38"/>
    </location>
</feature>
<feature type="mutagenesis site" description="130-fold less active than wild-type." evidence="2">
    <original>P</original>
    <variation>LTEER</variation>
    <location>
        <position position="55"/>
    </location>
</feature>
<feature type="mutagenesis site" description="Strong decrease of binding affinity." evidence="1">
    <original>F</original>
    <variation>A</variation>
    <location>
        <position position="114"/>
    </location>
</feature>
<feature type="mutagenesis site" description="Loss of arabinofuranosidase activity." evidence="1">
    <original>D</original>
    <variation>A</variation>
    <location>
        <position position="158"/>
    </location>
</feature>
<feature type="mutagenesis site" description="Loss of arabinofuranosidase activity." evidence="1">
    <original>D</original>
    <variation>N</variation>
    <location>
        <position position="158"/>
    </location>
</feature>
<feature type="mutagenesis site" description="Loss of arabinofuranosidase activity." evidence="1">
    <original>E</original>
    <variation>A</variation>
    <location>
        <position position="221"/>
    </location>
</feature>
<feature type="mutagenesis site" description="Loss of arabinofuranosidase activity." evidence="1">
    <original>E</original>
    <variation>Q</variation>
    <location>
        <position position="221"/>
    </location>
</feature>
<feature type="mutagenesis site" description="Very slight decrease in arabinofuranosidase activity." evidence="2">
    <original>Q</original>
    <variation>L</variation>
    <location>
        <position position="316"/>
    </location>
</feature>
<feature type="strand" evidence="8">
    <location>
        <begin position="40"/>
        <end position="44"/>
    </location>
</feature>
<feature type="strand" evidence="8">
    <location>
        <begin position="47"/>
        <end position="55"/>
    </location>
</feature>
<feature type="strand" evidence="8">
    <location>
        <begin position="58"/>
        <end position="77"/>
    </location>
</feature>
<feature type="helix" evidence="8">
    <location>
        <begin position="82"/>
        <end position="85"/>
    </location>
</feature>
<feature type="strand" evidence="8">
    <location>
        <begin position="91"/>
        <end position="101"/>
    </location>
</feature>
<feature type="strand" evidence="8">
    <location>
        <begin position="104"/>
        <end position="111"/>
    </location>
</feature>
<feature type="strand" evidence="8">
    <location>
        <begin position="119"/>
        <end position="127"/>
    </location>
</feature>
<feature type="strand" evidence="8">
    <location>
        <begin position="139"/>
        <end position="147"/>
    </location>
</feature>
<feature type="turn" evidence="8">
    <location>
        <begin position="149"/>
        <end position="151"/>
    </location>
</feature>
<feature type="strand" evidence="8">
    <location>
        <begin position="160"/>
        <end position="163"/>
    </location>
</feature>
<feature type="strand" evidence="8">
    <location>
        <begin position="169"/>
        <end position="173"/>
    </location>
</feature>
<feature type="strand" evidence="8">
    <location>
        <begin position="180"/>
        <end position="185"/>
    </location>
</feature>
<feature type="strand" evidence="8">
    <location>
        <begin position="189"/>
        <end position="192"/>
    </location>
</feature>
<feature type="strand" evidence="8">
    <location>
        <begin position="198"/>
        <end position="202"/>
    </location>
</feature>
<feature type="strand" evidence="8">
    <location>
        <begin position="220"/>
        <end position="228"/>
    </location>
</feature>
<feature type="strand" evidence="8">
    <location>
        <begin position="231"/>
        <end position="239"/>
    </location>
</feature>
<feature type="helix" evidence="8">
    <location>
        <begin position="244"/>
        <end position="246"/>
    </location>
</feature>
<feature type="strand" evidence="8">
    <location>
        <begin position="250"/>
        <end position="258"/>
    </location>
</feature>
<feature type="strand" evidence="8">
    <location>
        <begin position="268"/>
        <end position="270"/>
    </location>
</feature>
<feature type="helix" evidence="8">
    <location>
        <begin position="271"/>
        <end position="273"/>
    </location>
</feature>
<feature type="strand" evidence="8">
    <location>
        <begin position="277"/>
        <end position="280"/>
    </location>
</feature>
<feature type="strand" evidence="8">
    <location>
        <begin position="284"/>
        <end position="297"/>
    </location>
</feature>
<feature type="strand" evidence="8">
    <location>
        <begin position="300"/>
        <end position="309"/>
    </location>
</feature>
<feature type="helix" evidence="8">
    <location>
        <begin position="310"/>
        <end position="312"/>
    </location>
</feature>
<feature type="strand" evidence="8">
    <location>
        <begin position="316"/>
        <end position="322"/>
    </location>
</feature>
<feature type="helix" evidence="8">
    <location>
        <begin position="337"/>
        <end position="340"/>
    </location>
</feature>
<feature type="strand" evidence="7">
    <location>
        <begin position="344"/>
        <end position="346"/>
    </location>
</feature>
<reference key="1">
    <citation type="journal article" date="1997" name="Biochem. J.">
        <title>Arabinanase A from Pseudomonas fluorescens subsp. cellulosa exhibits both an endo- and an exo- mode of action.</title>
        <authorList>
            <person name="McKie V.A."/>
            <person name="Black G.W."/>
            <person name="Millward-Sadler S.J."/>
            <person name="Hazlewood G.P."/>
            <person name="Laurie J.I."/>
            <person name="Gilbert H.J."/>
        </authorList>
    </citation>
    <scope>NUCLEOTIDE SEQUENCE [GENOMIC DNA]</scope>
    <scope>PROTEIN SEQUENCE OF 32-51</scope>
    <scope>FUNCTION</scope>
    <scope>CATALYTIC ACTIVITY</scope>
    <scope>INDUCTION</scope>
    <scope>BIOPHYSICOCHEMICAL PROPERTIES</scope>
    <scope>SUBCELLULAR LOCATION</scope>
    <scope>SUBSTRATE SPECIFICITY</scope>
    <scope>NOMENCLATURE</scope>
</reference>
<reference key="2">
    <citation type="journal article" date="2005" name="Proc. Natl. Acad. Sci. U.S.A.">
        <title>Tailored catalysts for plant cell-wall degradation: redesigning the exo/endo preference of Cellvibrio japonicus arabinanase 43A.</title>
        <authorList>
            <person name="Proctor M.R."/>
            <person name="Taylor E.J."/>
            <person name="Nurizzo D."/>
            <person name="Turkenburg J.P."/>
            <person name="Lloyd R.M."/>
            <person name="Vardakou M."/>
            <person name="Davies G.J."/>
            <person name="Gilbert H.J."/>
        </authorList>
    </citation>
    <scope>FUNCTION</scope>
    <scope>CATALYTIC ACTIVITY</scope>
    <scope>MUTAGENESIS OF ASP-35; PRO-55 AND GLN-316</scope>
    <scope>REACTION MECHANISM</scope>
</reference>
<reference key="3">
    <citation type="journal article" date="2002" name="Nat. Struct. Biol.">
        <title>Cellvibrio japonicus alpha-L-arabinanase 43A has a novel five-blade beta-propeller fold.</title>
        <authorList>
            <person name="Nurizzo D."/>
            <person name="Turkenburg J.P."/>
            <person name="Charnock S.J."/>
            <person name="Roberts S.M."/>
            <person name="Dodson E.J."/>
            <person name="McKie V.A."/>
            <person name="Taylor E.J."/>
            <person name="Gilbert H.J."/>
            <person name="Davies G.J."/>
        </authorList>
    </citation>
    <scope>X-RAY CRYSTALLOGRAPHY (1.89 ANGSTROMS) OF 30-347 OF MUTANT ALA-158 IN COMPLEX WITH ALPHA-L-ARABINOFURANOSE</scope>
    <scope>FUNCTION</scope>
    <scope>MUTAGENESIS OF ASP-38; PHE-114; ASP-158 AND GLU-221</scope>
    <scope>BIOPHYSICOCHEMICAL PROPERTIES</scope>
    <scope>SUBUNIT</scope>
</reference>
<gene>
    <name type="primary">arbA</name>
</gene>
<comment type="function">
    <text evidence="1 2 3">Involved in the degradation of arabinan and is a key enzyme in the complete degradation of the plant cell wall. Catalyzes the cleavage of the terminal alpha-(1-&gt;5)-arabinofuranosyl bonds of linear arabinan and carboxymethylarabinan to produce almost exclusively arabinotriose.</text>
</comment>
<comment type="catalytic activity">
    <reaction evidence="2 3">
        <text>Hydrolysis of terminal non-reducing alpha-L-arabinofuranoside residues in alpha-L-arabinosides.</text>
        <dbReference type="EC" id="3.2.1.55"/>
    </reaction>
</comment>
<comment type="biophysicochemical properties">
    <kinetics>
        <KM evidence="1 3">2.6 mM for arabinan</KM>
        <KM evidence="1 3">3.75 mM for arabinan</KM>
        <text>kcat is 17.1 sec(-1) for arabinan. kcat is 212 sec(-1) for carboxymethylarabinan.</text>
    </kinetics>
</comment>
<comment type="pathway">
    <text>Glycan metabolism; L-arabinan degradation.</text>
</comment>
<comment type="subunit">
    <text evidence="1">Homodimer.</text>
</comment>
<comment type="subcellular location">
    <subcellularLocation>
        <location evidence="6">Secreted</location>
    </subcellularLocation>
</comment>
<comment type="induction">
    <text evidence="3">Induced by arabinan and repressed by glucose.</text>
</comment>
<comment type="miscellaneous">
    <text evidence="6">The relative activity of the enzyme against the arabino-oligosaccharides increases with the increasing size of the substrate up to arabinohexaose, after which the rate remains constant. The substrate-binding site accommodates six arabinose units, with cleavage occurring between binding sites 3 and 4 (PubMed:9163351).</text>
</comment>
<comment type="similarity">
    <text evidence="4">Belongs to the glycosyl hydrolase 43 family.</text>
</comment>
<proteinExistence type="evidence at protein level"/>
<accession>P95470</accession>